<comment type="function">
    <text evidence="1">Small GTP-binding protein which cycles between an inactive GDP-bound and an active GTP-bound form, and the rate of cycling is regulated by guanine nucleotide exchange factors (GEF) and GTPase-activating proteins (GAP). GTP-binding protein that does not act as an allosteric activator of the cholera toxin catalytic subunit. Recruits CYTH1, CYTH2, CYTH3 and CYTH4 to the plasma membrane in GDP-bound form (By similarity).</text>
</comment>
<comment type="subunit">
    <text evidence="1">Interacts with CYTH2. Interacts with KPNA2; the interaction is direct. Does not interact with ARL4A (By similarity).</text>
</comment>
<comment type="subcellular location">
    <subcellularLocation>
        <location evidence="1">Cell membrane</location>
    </subcellularLocation>
    <subcellularLocation>
        <location evidence="1">Cytoplasm</location>
    </subcellularLocation>
    <subcellularLocation>
        <location evidence="1">Nucleus</location>
        <location evidence="1">Nucleolus</location>
    </subcellularLocation>
    <text evidence="1">Localization in the nucleolus is dependent by nucleotide binding.</text>
</comment>
<comment type="PTM">
    <text evidence="1">Myristoylated.</text>
</comment>
<comment type="similarity">
    <text evidence="3">Belongs to the small GTPase superfamily. Arf family.</text>
</comment>
<feature type="initiator methionine" description="Removed" evidence="2">
    <location>
        <position position="1"/>
    </location>
</feature>
<feature type="chain" id="PRO_0000245355" description="ADP-ribosylation factor-like protein 4A">
    <location>
        <begin position="2"/>
        <end position="200"/>
    </location>
</feature>
<feature type="binding site" evidence="1">
    <location>
        <begin position="27"/>
        <end position="34"/>
    </location>
    <ligand>
        <name>GTP</name>
        <dbReference type="ChEBI" id="CHEBI:37565"/>
    </ligand>
</feature>
<feature type="binding site" evidence="1">
    <location>
        <begin position="75"/>
        <end position="79"/>
    </location>
    <ligand>
        <name>GTP</name>
        <dbReference type="ChEBI" id="CHEBI:37565"/>
    </ligand>
</feature>
<feature type="binding site" evidence="1">
    <location>
        <begin position="134"/>
        <end position="137"/>
    </location>
    <ligand>
        <name>GTP</name>
        <dbReference type="ChEBI" id="CHEBI:37565"/>
    </ligand>
</feature>
<feature type="lipid moiety-binding region" description="N-myristoyl glycine" evidence="2">
    <location>
        <position position="2"/>
    </location>
</feature>
<keyword id="KW-1003">Cell membrane</keyword>
<keyword id="KW-0963">Cytoplasm</keyword>
<keyword id="KW-0342">GTP-binding</keyword>
<keyword id="KW-0449">Lipoprotein</keyword>
<keyword id="KW-0472">Membrane</keyword>
<keyword id="KW-0519">Myristate</keyword>
<keyword id="KW-0547">Nucleotide-binding</keyword>
<keyword id="KW-0539">Nucleus</keyword>
<keyword id="KW-1185">Reference proteome</keyword>
<sequence length="200" mass="22588">MGNGLSDQTSILSSLPSFQSFHIVILGLDCAGKTTVLYRLQFNEFVNTVPTKGFNTEKIKVTLGNSKTVTFHFWDVGGQEKLRPLWKSYTRCTDGIVFVVDSVDVERMEEAKTELHKITRISENQGVPVLIVANKQDLRNSLSLSEIEKLLAMGELSSSTPWHLQPTCAIIGDGLKEGLEKLHDMIIKRRKMLRQQKKKR</sequence>
<name>ARL4A_BOVIN</name>
<evidence type="ECO:0000250" key="1"/>
<evidence type="ECO:0000255" key="2"/>
<evidence type="ECO:0000305" key="3"/>
<organism>
    <name type="scientific">Bos taurus</name>
    <name type="common">Bovine</name>
    <dbReference type="NCBI Taxonomy" id="9913"/>
    <lineage>
        <taxon>Eukaryota</taxon>
        <taxon>Metazoa</taxon>
        <taxon>Chordata</taxon>
        <taxon>Craniata</taxon>
        <taxon>Vertebrata</taxon>
        <taxon>Euteleostomi</taxon>
        <taxon>Mammalia</taxon>
        <taxon>Eutheria</taxon>
        <taxon>Laurasiatheria</taxon>
        <taxon>Artiodactyla</taxon>
        <taxon>Ruminantia</taxon>
        <taxon>Pecora</taxon>
        <taxon>Bovidae</taxon>
        <taxon>Bovinae</taxon>
        <taxon>Bos</taxon>
    </lineage>
</organism>
<proteinExistence type="evidence at transcript level"/>
<protein>
    <recommendedName>
        <fullName>ADP-ribosylation factor-like protein 4A</fullName>
    </recommendedName>
</protein>
<reference key="1">
    <citation type="submission" date="2005-08" db="EMBL/GenBank/DDBJ databases">
        <authorList>
            <consortium name="NIH - Mammalian Gene Collection (MGC) project"/>
        </authorList>
    </citation>
    <scope>NUCLEOTIDE SEQUENCE [LARGE SCALE MRNA]</scope>
    <source>
        <strain>Crossbred X Angus</strain>
        <tissue>Ileum</tissue>
    </source>
</reference>
<gene>
    <name type="primary">ARL4A</name>
</gene>
<accession>Q3T0M9</accession>
<dbReference type="EMBL" id="BC102325">
    <property type="protein sequence ID" value="AAI02326.1"/>
    <property type="molecule type" value="mRNA"/>
</dbReference>
<dbReference type="RefSeq" id="NP_001070453.1">
    <property type="nucleotide sequence ID" value="NM_001076985.2"/>
</dbReference>
<dbReference type="RefSeq" id="XP_005205270.1">
    <property type="nucleotide sequence ID" value="XM_005205213.2"/>
</dbReference>
<dbReference type="RefSeq" id="XP_005205271.1">
    <property type="nucleotide sequence ID" value="XM_005205214.2"/>
</dbReference>
<dbReference type="RefSeq" id="XP_005205272.1">
    <property type="nucleotide sequence ID" value="XM_005205215.3"/>
</dbReference>
<dbReference type="RefSeq" id="XP_005205273.1">
    <property type="nucleotide sequence ID" value="XM_005205216.5"/>
</dbReference>
<dbReference type="SMR" id="Q3T0M9"/>
<dbReference type="FunCoup" id="Q3T0M9">
    <property type="interactions" value="578"/>
</dbReference>
<dbReference type="STRING" id="9913.ENSBTAP00000003722"/>
<dbReference type="PaxDb" id="9913-ENSBTAP00000003722"/>
<dbReference type="Ensembl" id="ENSBTAT00000003722.5">
    <property type="protein sequence ID" value="ENSBTAP00000003722.3"/>
    <property type="gene ID" value="ENSBTAG00000002869.5"/>
</dbReference>
<dbReference type="Ensembl" id="ENSBTAT00000122337.1">
    <property type="protein sequence ID" value="ENSBTAP00000078442.1"/>
    <property type="gene ID" value="ENSBTAG00000002869.5"/>
</dbReference>
<dbReference type="GeneID" id="767906"/>
<dbReference type="KEGG" id="bta:767906"/>
<dbReference type="CTD" id="10124"/>
<dbReference type="VEuPathDB" id="HostDB:ENSBTAG00000002869"/>
<dbReference type="VGNC" id="VGNC:26144">
    <property type="gene designation" value="ARL4A"/>
</dbReference>
<dbReference type="eggNOG" id="KOG0070">
    <property type="taxonomic scope" value="Eukaryota"/>
</dbReference>
<dbReference type="GeneTree" id="ENSGT00940000154546"/>
<dbReference type="HOGENOM" id="CLU_040729_9_3_1"/>
<dbReference type="InParanoid" id="Q3T0M9"/>
<dbReference type="OMA" id="ETKQNWH"/>
<dbReference type="OrthoDB" id="2011769at2759"/>
<dbReference type="TreeFam" id="TF105464"/>
<dbReference type="Proteomes" id="UP000009136">
    <property type="component" value="Chromosome 4"/>
</dbReference>
<dbReference type="Bgee" id="ENSBTAG00000002869">
    <property type="expression patterns" value="Expressed in spermatid and 105 other cell types or tissues"/>
</dbReference>
<dbReference type="GO" id="GO:0005737">
    <property type="term" value="C:cytoplasm"/>
    <property type="evidence" value="ECO:0000318"/>
    <property type="project" value="GO_Central"/>
</dbReference>
<dbReference type="GO" id="GO:0005730">
    <property type="term" value="C:nucleolus"/>
    <property type="evidence" value="ECO:0000250"/>
    <property type="project" value="UniProtKB"/>
</dbReference>
<dbReference type="GO" id="GO:0005634">
    <property type="term" value="C:nucleus"/>
    <property type="evidence" value="ECO:0000250"/>
    <property type="project" value="UniProtKB"/>
</dbReference>
<dbReference type="GO" id="GO:0005886">
    <property type="term" value="C:plasma membrane"/>
    <property type="evidence" value="ECO:0000250"/>
    <property type="project" value="UniProtKB"/>
</dbReference>
<dbReference type="GO" id="GO:0005525">
    <property type="term" value="F:GTP binding"/>
    <property type="evidence" value="ECO:0000250"/>
    <property type="project" value="UniProtKB"/>
</dbReference>
<dbReference type="GO" id="GO:0003924">
    <property type="term" value="F:GTPase activity"/>
    <property type="evidence" value="ECO:0007669"/>
    <property type="project" value="InterPro"/>
</dbReference>
<dbReference type="GO" id="GO:0006886">
    <property type="term" value="P:intracellular protein transport"/>
    <property type="evidence" value="ECO:0000318"/>
    <property type="project" value="GO_Central"/>
</dbReference>
<dbReference type="GO" id="GO:0016192">
    <property type="term" value="P:vesicle-mediated transport"/>
    <property type="evidence" value="ECO:0000318"/>
    <property type="project" value="GO_Central"/>
</dbReference>
<dbReference type="CDD" id="cd04152">
    <property type="entry name" value="Arl4_Arl7"/>
    <property type="match status" value="1"/>
</dbReference>
<dbReference type="FunFam" id="3.40.50.300:FF:000658">
    <property type="entry name" value="ADP-ribosylation factor-like protein 4A"/>
    <property type="match status" value="1"/>
</dbReference>
<dbReference type="Gene3D" id="3.40.50.300">
    <property type="entry name" value="P-loop containing nucleotide triphosphate hydrolases"/>
    <property type="match status" value="1"/>
</dbReference>
<dbReference type="InterPro" id="IPR027417">
    <property type="entry name" value="P-loop_NTPase"/>
</dbReference>
<dbReference type="InterPro" id="IPR005225">
    <property type="entry name" value="Small_GTP-bd"/>
</dbReference>
<dbReference type="InterPro" id="IPR024156">
    <property type="entry name" value="Small_GTPase_ARF"/>
</dbReference>
<dbReference type="InterPro" id="IPR006689">
    <property type="entry name" value="Small_GTPase_ARF/SAR"/>
</dbReference>
<dbReference type="NCBIfam" id="TIGR00231">
    <property type="entry name" value="small_GTP"/>
    <property type="match status" value="1"/>
</dbReference>
<dbReference type="PANTHER" id="PTHR11711">
    <property type="entry name" value="ADP RIBOSYLATION FACTOR-RELATED"/>
    <property type="match status" value="1"/>
</dbReference>
<dbReference type="Pfam" id="PF00025">
    <property type="entry name" value="Arf"/>
    <property type="match status" value="1"/>
</dbReference>
<dbReference type="PRINTS" id="PR00449">
    <property type="entry name" value="RASTRNSFRMNG"/>
</dbReference>
<dbReference type="SMART" id="SM00177">
    <property type="entry name" value="ARF"/>
    <property type="match status" value="1"/>
</dbReference>
<dbReference type="SMART" id="SM00175">
    <property type="entry name" value="RAB"/>
    <property type="match status" value="1"/>
</dbReference>
<dbReference type="SMART" id="SM00173">
    <property type="entry name" value="RAS"/>
    <property type="match status" value="1"/>
</dbReference>
<dbReference type="SMART" id="SM00178">
    <property type="entry name" value="SAR"/>
    <property type="match status" value="1"/>
</dbReference>
<dbReference type="SUPFAM" id="SSF52540">
    <property type="entry name" value="P-loop containing nucleoside triphosphate hydrolases"/>
    <property type="match status" value="1"/>
</dbReference>
<dbReference type="PROSITE" id="PS51417">
    <property type="entry name" value="ARF"/>
    <property type="match status" value="1"/>
</dbReference>